<geneLocation type="chloroplast"/>
<gene>
    <name evidence="1" type="primary">petG</name>
</gene>
<keyword id="KW-0150">Chloroplast</keyword>
<keyword id="KW-0249">Electron transport</keyword>
<keyword id="KW-0472">Membrane</keyword>
<keyword id="KW-0602">Photosynthesis</keyword>
<keyword id="KW-0934">Plastid</keyword>
<keyword id="KW-0793">Thylakoid</keyword>
<keyword id="KW-0812">Transmembrane</keyword>
<keyword id="KW-1133">Transmembrane helix</keyword>
<keyword id="KW-0813">Transport</keyword>
<dbReference type="EMBL" id="D38021">
    <property type="protein sequence ID" value="BAA07223.1"/>
    <property type="molecule type" value="Genomic_DNA"/>
</dbReference>
<dbReference type="SMR" id="P69455"/>
<dbReference type="GO" id="GO:0009535">
    <property type="term" value="C:chloroplast thylakoid membrane"/>
    <property type="evidence" value="ECO:0007669"/>
    <property type="project" value="UniProtKB-SubCell"/>
</dbReference>
<dbReference type="GO" id="GO:0009512">
    <property type="term" value="C:cytochrome b6f complex"/>
    <property type="evidence" value="ECO:0007669"/>
    <property type="project" value="InterPro"/>
</dbReference>
<dbReference type="GO" id="GO:0045158">
    <property type="term" value="F:electron transporter, transferring electrons within cytochrome b6/f complex of photosystem II activity"/>
    <property type="evidence" value="ECO:0007669"/>
    <property type="project" value="UniProtKB-UniRule"/>
</dbReference>
<dbReference type="GO" id="GO:0017004">
    <property type="term" value="P:cytochrome complex assembly"/>
    <property type="evidence" value="ECO:0007669"/>
    <property type="project" value="UniProtKB-UniRule"/>
</dbReference>
<dbReference type="GO" id="GO:0015979">
    <property type="term" value="P:photosynthesis"/>
    <property type="evidence" value="ECO:0007669"/>
    <property type="project" value="UniProtKB-KW"/>
</dbReference>
<dbReference type="HAMAP" id="MF_00432">
    <property type="entry name" value="Cytb6_f_PetG"/>
    <property type="match status" value="1"/>
</dbReference>
<dbReference type="InterPro" id="IPR003683">
    <property type="entry name" value="Cyt_6/f_cplx_su5"/>
</dbReference>
<dbReference type="InterPro" id="IPR036099">
    <property type="entry name" value="Cyt_6/f_cplx_su5_sf"/>
</dbReference>
<dbReference type="NCBIfam" id="NF001907">
    <property type="entry name" value="PRK00665.1"/>
    <property type="match status" value="1"/>
</dbReference>
<dbReference type="Pfam" id="PF02529">
    <property type="entry name" value="PetG"/>
    <property type="match status" value="1"/>
</dbReference>
<dbReference type="PIRSF" id="PIRSF000034">
    <property type="entry name" value="Cyt_b6-f_V"/>
    <property type="match status" value="1"/>
</dbReference>
<dbReference type="SUPFAM" id="SSF103446">
    <property type="entry name" value="PetG subunit of the cytochrome b6f complex"/>
    <property type="match status" value="1"/>
</dbReference>
<reference key="1">
    <citation type="journal article" date="1995" name="Curr. Genet.">
        <title>The chloroplast trnP-trnW-petG gene cluster in the mitochondrial genomes of Beta vulgaris, B. trigyna and B. webbiana: evolutionary aspects.</title>
        <authorList>
            <person name="Kubo T."/>
            <person name="Yanai Y."/>
            <person name="Kinoshita T."/>
            <person name="Mikami T."/>
        </authorList>
    </citation>
    <scope>NUCLEOTIDE SEQUENCE [GENOMIC DNA]</scope>
    <source>
        <strain>cv. WB11</strain>
        <tissue>Leaf</tissue>
    </source>
</reference>
<protein>
    <recommendedName>
        <fullName evidence="1">Cytochrome b6-f complex subunit 5</fullName>
    </recommendedName>
    <alternativeName>
        <fullName evidence="1">Cytochrome b6-f complex subunit PetG</fullName>
    </alternativeName>
    <alternativeName>
        <fullName evidence="1">Cytochrome b6-f complex subunit V</fullName>
    </alternativeName>
</protein>
<proteinExistence type="inferred from homology"/>
<name>PETG_PATWE</name>
<evidence type="ECO:0000255" key="1">
    <source>
        <dbReference type="HAMAP-Rule" id="MF_00432"/>
    </source>
</evidence>
<accession>P69455</accession>
<accession>P12121</accession>
<accession>P32973</accession>
<feature type="chain" id="PRO_0000216372" description="Cytochrome b6-f complex subunit 5">
    <location>
        <begin position="1"/>
        <end position="37"/>
    </location>
</feature>
<feature type="transmembrane region" description="Helical" evidence="1">
    <location>
        <begin position="5"/>
        <end position="25"/>
    </location>
</feature>
<comment type="function">
    <text evidence="1">Component of the cytochrome b6-f complex, which mediates electron transfer between photosystem II (PSII) and photosystem I (PSI), cyclic electron flow around PSI, and state transitions. PetG is required for either the stability or assembly of the cytochrome b6-f complex.</text>
</comment>
<comment type="subunit">
    <text evidence="1">The 4 large subunits of the cytochrome b6-f complex are cytochrome b6, subunit IV (17 kDa polypeptide, PetD), cytochrome f and the Rieske protein, while the 4 small subunits are PetG, PetL, PetM and PetN. The complex functions as a dimer.</text>
</comment>
<comment type="subcellular location">
    <subcellularLocation>
        <location evidence="1">Plastid</location>
        <location evidence="1">Chloroplast thylakoid membrane</location>
        <topology evidence="1">Single-pass membrane protein</topology>
    </subcellularLocation>
</comment>
<comment type="similarity">
    <text evidence="1">Belongs to the PetG family.</text>
</comment>
<organism>
    <name type="scientific">Patellifolia webbiana</name>
    <name type="common">Patellaria webbiana</name>
    <name type="synonym">Beta webbiana</name>
    <dbReference type="NCBI Taxonomy" id="35923"/>
    <lineage>
        <taxon>Eukaryota</taxon>
        <taxon>Viridiplantae</taxon>
        <taxon>Streptophyta</taxon>
        <taxon>Embryophyta</taxon>
        <taxon>Tracheophyta</taxon>
        <taxon>Spermatophyta</taxon>
        <taxon>Magnoliopsida</taxon>
        <taxon>eudicotyledons</taxon>
        <taxon>Gunneridae</taxon>
        <taxon>Pentapetalae</taxon>
        <taxon>Caryophyllales</taxon>
        <taxon>Chenopodiaceae</taxon>
        <taxon>Betoideae</taxon>
        <taxon>Patellifolia</taxon>
    </lineage>
</organism>
<sequence>MIEVFLFGIVLGLIPITLAGLFVTAYLQYRRGDQLDL</sequence>